<geneLocation type="mitochondrion"/>
<sequence length="524" mass="57757">MTNMVRWLFSTNHKDIGTLYFIFGAIAGVMGTCFSVLIRMELARPGDQILGGNHQLYNVLITAHAFLMIFFMVMPAMIGGFGNWFVPILIGAPDMAFPRLNNISFWLLPPSLLLLLSSALVEVGSGTGWTVYPPLSGITSHSGGAVDLAIFSLHLSGISSILGSINFITTIFNMRGPGMTMHRLPLFVWSVLVTAFLLLLSLPVLAGAITMLLTDRNFNTTFFDPAGGGDPILYQHLFWFFGHPEVYILILPGFGIISHIVSTFSRKPVFGYLGMVYAMISIGVLGFLVWAHHMFTVGLDVDTRAYFTAATMIIAVPTGIKIFSWIATMWGGSIQYKTPMLFAVGFIFLFTIGGLTGIVLANSGLDIALHDTYYVVAHFHYVLSMGAVFALFAGFYYWVGKIFGRTYPETLGQIHFWITFFGVNLTFFPMHFLGLSGMPRRIPDYPDAYAGWNALSSFGSYISVVGIRRFFVVVAITSSSGKNQKCAESPWAVEQNPTTLEWLVQSPPAFHTFGELPAVKETKS</sequence>
<feature type="chain" id="PRO_0000183276" description="Cytochrome c oxidase subunit 1">
    <location>
        <begin position="1"/>
        <end position="524"/>
    </location>
</feature>
<feature type="transmembrane region" description="Helical" evidence="3">
    <location>
        <begin position="18"/>
        <end position="38"/>
    </location>
</feature>
<feature type="transmembrane region" description="Helical" evidence="3">
    <location>
        <begin position="66"/>
        <end position="86"/>
    </location>
</feature>
<feature type="transmembrane region" description="Helical" evidence="3">
    <location>
        <begin position="103"/>
        <end position="123"/>
    </location>
</feature>
<feature type="transmembrane region" description="Helical" evidence="3">
    <location>
        <begin position="148"/>
        <end position="168"/>
    </location>
</feature>
<feature type="transmembrane region" description="Helical" evidence="3">
    <location>
        <begin position="186"/>
        <end position="206"/>
    </location>
</feature>
<feature type="transmembrane region" description="Helical" evidence="3">
    <location>
        <begin position="237"/>
        <end position="257"/>
    </location>
</feature>
<feature type="transmembrane region" description="Helical" evidence="3">
    <location>
        <begin position="269"/>
        <end position="289"/>
    </location>
</feature>
<feature type="transmembrane region" description="Helical" evidence="3">
    <location>
        <begin position="312"/>
        <end position="332"/>
    </location>
</feature>
<feature type="transmembrane region" description="Helical" evidence="3">
    <location>
        <begin position="340"/>
        <end position="360"/>
    </location>
</feature>
<feature type="transmembrane region" description="Helical" evidence="3">
    <location>
        <begin position="379"/>
        <end position="399"/>
    </location>
</feature>
<feature type="transmembrane region" description="Helical" evidence="3">
    <location>
        <begin position="414"/>
        <end position="434"/>
    </location>
</feature>
<feature type="transmembrane region" description="Helical" evidence="3">
    <location>
        <begin position="447"/>
        <end position="467"/>
    </location>
</feature>
<feature type="binding site" evidence="2">
    <location>
        <position position="41"/>
    </location>
    <ligand>
        <name>Ca(2+)</name>
        <dbReference type="ChEBI" id="CHEBI:29108"/>
    </ligand>
</feature>
<feature type="binding site" evidence="2">
    <location>
        <position position="46"/>
    </location>
    <ligand>
        <name>Ca(2+)</name>
        <dbReference type="ChEBI" id="CHEBI:29108"/>
    </ligand>
</feature>
<feature type="binding site" description="axial binding residue" evidence="2">
    <location>
        <position position="64"/>
    </location>
    <ligand>
        <name>Fe(II)-heme a</name>
        <dbReference type="ChEBI" id="CHEBI:61715"/>
        <note>low-spin</note>
    </ligand>
    <ligandPart>
        <name>Fe</name>
        <dbReference type="ChEBI" id="CHEBI:18248"/>
    </ligandPart>
</feature>
<feature type="binding site" evidence="2">
    <location>
        <position position="243"/>
    </location>
    <ligand>
        <name>Cu cation</name>
        <dbReference type="ChEBI" id="CHEBI:23378"/>
        <label>B</label>
    </ligand>
</feature>
<feature type="binding site" evidence="1">
    <location>
        <position position="247"/>
    </location>
    <ligand>
        <name>O2</name>
        <dbReference type="ChEBI" id="CHEBI:15379"/>
    </ligand>
</feature>
<feature type="binding site" evidence="2">
    <location>
        <position position="292"/>
    </location>
    <ligand>
        <name>Cu cation</name>
        <dbReference type="ChEBI" id="CHEBI:23378"/>
        <label>B</label>
    </ligand>
</feature>
<feature type="binding site" evidence="2">
    <location>
        <position position="293"/>
    </location>
    <ligand>
        <name>Cu cation</name>
        <dbReference type="ChEBI" id="CHEBI:23378"/>
        <label>B</label>
    </ligand>
</feature>
<feature type="binding site" evidence="2">
    <location>
        <position position="370"/>
    </location>
    <ligand>
        <name>Mg(2+)</name>
        <dbReference type="ChEBI" id="CHEBI:18420"/>
        <note>ligand shared with subunit 2</note>
    </ligand>
</feature>
<feature type="binding site" evidence="2">
    <location>
        <position position="371"/>
    </location>
    <ligand>
        <name>Mg(2+)</name>
        <dbReference type="ChEBI" id="CHEBI:18420"/>
        <note>ligand shared with subunit 2</note>
    </ligand>
</feature>
<feature type="binding site" description="axial binding residue" evidence="2">
    <location>
        <position position="378"/>
    </location>
    <ligand>
        <name>heme a3</name>
        <dbReference type="ChEBI" id="CHEBI:83282"/>
        <note>high-spin</note>
    </ligand>
    <ligandPart>
        <name>Fe</name>
        <dbReference type="ChEBI" id="CHEBI:18248"/>
    </ligandPart>
</feature>
<feature type="binding site" description="axial binding residue" evidence="2">
    <location>
        <position position="380"/>
    </location>
    <ligand>
        <name>Fe(II)-heme a</name>
        <dbReference type="ChEBI" id="CHEBI:61715"/>
        <note>low-spin</note>
    </ligand>
    <ligandPart>
        <name>Fe</name>
        <dbReference type="ChEBI" id="CHEBI:18248"/>
    </ligandPart>
</feature>
<feature type="binding site" evidence="2">
    <location>
        <position position="443"/>
    </location>
    <ligand>
        <name>Ca(2+)</name>
        <dbReference type="ChEBI" id="CHEBI:29108"/>
    </ligand>
</feature>
<feature type="cross-link" description="1'-histidyl-3'-tyrosine (His-Tyr)" evidence="2">
    <location>
        <begin position="243"/>
        <end position="247"/>
    </location>
</feature>
<keyword id="KW-0106">Calcium</keyword>
<keyword id="KW-0186">Copper</keyword>
<keyword id="KW-0249">Electron transport</keyword>
<keyword id="KW-0349">Heme</keyword>
<keyword id="KW-0408">Iron</keyword>
<keyword id="KW-0460">Magnesium</keyword>
<keyword id="KW-0472">Membrane</keyword>
<keyword id="KW-0479">Metal-binding</keyword>
<keyword id="KW-0496">Mitochondrion</keyword>
<keyword id="KW-0999">Mitochondrion inner membrane</keyword>
<keyword id="KW-0679">Respiratory chain</keyword>
<keyword id="KW-1278">Translocase</keyword>
<keyword id="KW-0812">Transmembrane</keyword>
<keyword id="KW-1133">Transmembrane helix</keyword>
<keyword id="KW-0813">Transport</keyword>
<evidence type="ECO:0000250" key="1">
    <source>
        <dbReference type="UniProtKB" id="P00396"/>
    </source>
</evidence>
<evidence type="ECO:0000250" key="2">
    <source>
        <dbReference type="UniProtKB" id="P00401"/>
    </source>
</evidence>
<evidence type="ECO:0000255" key="3"/>
<evidence type="ECO:0000305" key="4"/>
<protein>
    <recommendedName>
        <fullName>Cytochrome c oxidase subunit 1</fullName>
        <ecNumber>7.1.1.9</ecNumber>
    </recommendedName>
    <alternativeName>
        <fullName>Cytochrome c oxidase polypeptide I</fullName>
    </alternativeName>
</protein>
<reference key="1">
    <citation type="submission" date="1996-03" db="EMBL/GenBank/DDBJ databases">
        <title>Deficiency of cox1 gene expression in a wheat having Aegilops columnaris cytoplasm results in an impaired cytochrome c oxidase activity.</title>
        <authorList>
            <person name="Ikeda T.M."/>
            <person name="Tsunewaki K."/>
        </authorList>
    </citation>
    <scope>NUCLEOTIDE SEQUENCE [GENOMIC DNA]</scope>
</reference>
<dbReference type="EC" id="7.1.1.9"/>
<dbReference type="EMBL" id="U46764">
    <property type="protein sequence ID" value="AAA91209.1"/>
    <property type="molecule type" value="Genomic_DNA"/>
</dbReference>
<dbReference type="SMR" id="P68540"/>
<dbReference type="UniPathway" id="UPA00705"/>
<dbReference type="GO" id="GO:0005743">
    <property type="term" value="C:mitochondrial inner membrane"/>
    <property type="evidence" value="ECO:0007669"/>
    <property type="project" value="UniProtKB-SubCell"/>
</dbReference>
<dbReference type="GO" id="GO:0045277">
    <property type="term" value="C:respiratory chain complex IV"/>
    <property type="evidence" value="ECO:0007669"/>
    <property type="project" value="InterPro"/>
</dbReference>
<dbReference type="GO" id="GO:0004129">
    <property type="term" value="F:cytochrome-c oxidase activity"/>
    <property type="evidence" value="ECO:0007669"/>
    <property type="project" value="UniProtKB-EC"/>
</dbReference>
<dbReference type="GO" id="GO:0020037">
    <property type="term" value="F:heme binding"/>
    <property type="evidence" value="ECO:0007669"/>
    <property type="project" value="InterPro"/>
</dbReference>
<dbReference type="GO" id="GO:0046872">
    <property type="term" value="F:metal ion binding"/>
    <property type="evidence" value="ECO:0007669"/>
    <property type="project" value="UniProtKB-KW"/>
</dbReference>
<dbReference type="GO" id="GO:0015990">
    <property type="term" value="P:electron transport coupled proton transport"/>
    <property type="evidence" value="ECO:0007669"/>
    <property type="project" value="InterPro"/>
</dbReference>
<dbReference type="GO" id="GO:0006123">
    <property type="term" value="P:mitochondrial electron transport, cytochrome c to oxygen"/>
    <property type="evidence" value="ECO:0007669"/>
    <property type="project" value="TreeGrafter"/>
</dbReference>
<dbReference type="CDD" id="cd01663">
    <property type="entry name" value="Cyt_c_Oxidase_I"/>
    <property type="match status" value="1"/>
</dbReference>
<dbReference type="FunFam" id="1.20.210.10:FF:000001">
    <property type="entry name" value="Cytochrome c oxidase subunit 1"/>
    <property type="match status" value="1"/>
</dbReference>
<dbReference type="Gene3D" id="1.20.210.10">
    <property type="entry name" value="Cytochrome c oxidase-like, subunit I domain"/>
    <property type="match status" value="1"/>
</dbReference>
<dbReference type="InterPro" id="IPR023616">
    <property type="entry name" value="Cyt_c_oxase-like_su1_dom"/>
</dbReference>
<dbReference type="InterPro" id="IPR036927">
    <property type="entry name" value="Cyt_c_oxase-like_su1_sf"/>
</dbReference>
<dbReference type="InterPro" id="IPR000883">
    <property type="entry name" value="Cyt_C_Oxase_1"/>
</dbReference>
<dbReference type="InterPro" id="IPR023615">
    <property type="entry name" value="Cyt_c_Oxase_su1_BS"/>
</dbReference>
<dbReference type="InterPro" id="IPR033944">
    <property type="entry name" value="Cyt_c_oxase_su1_dom"/>
</dbReference>
<dbReference type="InterPro" id="IPR014241">
    <property type="entry name" value="Cyt_c_oxidase_su1_bac"/>
</dbReference>
<dbReference type="NCBIfam" id="TIGR02891">
    <property type="entry name" value="CtaD_CoxA"/>
    <property type="match status" value="1"/>
</dbReference>
<dbReference type="PANTHER" id="PTHR10422">
    <property type="entry name" value="CYTOCHROME C OXIDASE SUBUNIT 1"/>
    <property type="match status" value="1"/>
</dbReference>
<dbReference type="PANTHER" id="PTHR10422:SF45">
    <property type="entry name" value="CYTOCHROME C OXIDASE SUBUNIT 1"/>
    <property type="match status" value="1"/>
</dbReference>
<dbReference type="Pfam" id="PF00115">
    <property type="entry name" value="COX1"/>
    <property type="match status" value="1"/>
</dbReference>
<dbReference type="PRINTS" id="PR01165">
    <property type="entry name" value="CYCOXIDASEI"/>
</dbReference>
<dbReference type="SUPFAM" id="SSF81442">
    <property type="entry name" value="Cytochrome c oxidase subunit I-like"/>
    <property type="match status" value="1"/>
</dbReference>
<dbReference type="PROSITE" id="PS50855">
    <property type="entry name" value="COX1"/>
    <property type="match status" value="1"/>
</dbReference>
<dbReference type="PROSITE" id="PS00077">
    <property type="entry name" value="COX1_CUB"/>
    <property type="match status" value="1"/>
</dbReference>
<comment type="function">
    <text evidence="2">Component of the cytochrome c oxidase, the last enzyme in the mitochondrial electron transport chain which drives oxidative phosphorylation. The respiratory chain contains 3 multisubunit complexes succinate dehydrogenase (complex II, CII), ubiquinol-cytochrome c oxidoreductase (cytochrome b-c1 complex, complex III, CIII) and cytochrome c oxidase (complex IV, CIV), that cooperate to transfer electrons derived from NADH and succinate to molecular oxygen, creating an electrochemical gradient over the inner membrane that drives transmembrane transport and the ATP synthase. Cytochrome c oxidase is the component of the respiratory chain that catalyzes the reduction of oxygen to water. Electrons originating from reduced cytochrome c in the intermembrane space (IMS) are transferred via the dinuclear copper A center (CU(A)) of subunit 2 and heme A of subunit 1 to the active site in subunit 1, a binuclear center (BNC) formed by heme A3 and copper B (CU(B)). The BNC reduces molecular oxygen to 2 water molecules using 4 electrons from cytochrome c in the IMS and 4 protons from the mitochondrial matrix.</text>
</comment>
<comment type="catalytic activity">
    <reaction evidence="2">
        <text>4 Fe(II)-[cytochrome c] + O2 + 8 H(+)(in) = 4 Fe(III)-[cytochrome c] + 2 H2O + 4 H(+)(out)</text>
        <dbReference type="Rhea" id="RHEA:11436"/>
        <dbReference type="Rhea" id="RHEA-COMP:10350"/>
        <dbReference type="Rhea" id="RHEA-COMP:14399"/>
        <dbReference type="ChEBI" id="CHEBI:15377"/>
        <dbReference type="ChEBI" id="CHEBI:15378"/>
        <dbReference type="ChEBI" id="CHEBI:15379"/>
        <dbReference type="ChEBI" id="CHEBI:29033"/>
        <dbReference type="ChEBI" id="CHEBI:29034"/>
        <dbReference type="EC" id="7.1.1.9"/>
    </reaction>
    <physiologicalReaction direction="left-to-right" evidence="2">
        <dbReference type="Rhea" id="RHEA:11437"/>
    </physiologicalReaction>
</comment>
<comment type="cofactor">
    <cofactor evidence="2">
        <name>heme</name>
        <dbReference type="ChEBI" id="CHEBI:30413"/>
    </cofactor>
    <text evidence="2">Binds 2 heme A groups non-covalently per subunit.</text>
</comment>
<comment type="cofactor">
    <cofactor evidence="2">
        <name>Cu cation</name>
        <dbReference type="ChEBI" id="CHEBI:23378"/>
    </cofactor>
    <text evidence="2">Binds a copper B center.</text>
</comment>
<comment type="pathway">
    <text evidence="2">Energy metabolism; oxidative phosphorylation.</text>
</comment>
<comment type="subunit">
    <text evidence="2">Component of the cytochrome c oxidase (complex IV, CIV), a multisubunit enzyme composed of a catalytic core of 3 subunits and several supernumerary subunits. The complex exists as a monomer or a dimer and forms supercomplexes (SCs) in the inner mitochondrial membrane with ubiquinol-cytochrome c oxidoreductase (cytochrome b-c1 complex, complex III, CIII).</text>
</comment>
<comment type="subcellular location">
    <subcellularLocation>
        <location evidence="2">Mitochondrion inner membrane</location>
        <topology evidence="2">Multi-pass membrane protein</topology>
    </subcellularLocation>
</comment>
<comment type="similarity">
    <text evidence="4">Belongs to the heme-copper respiratory oxidase family.</text>
</comment>
<gene>
    <name type="primary">COX1</name>
    <name type="synonym">COI</name>
    <name type="synonym">COXI</name>
</gene>
<name>COX1_AEGCO</name>
<organism>
    <name type="scientific">Aegilops columnaris</name>
    <name type="common">Goatgrass</name>
    <name type="synonym">Triticum columnare</name>
    <dbReference type="NCBI Taxonomy" id="4493"/>
    <lineage>
        <taxon>Eukaryota</taxon>
        <taxon>Viridiplantae</taxon>
        <taxon>Streptophyta</taxon>
        <taxon>Embryophyta</taxon>
        <taxon>Tracheophyta</taxon>
        <taxon>Spermatophyta</taxon>
        <taxon>Magnoliopsida</taxon>
        <taxon>Liliopsida</taxon>
        <taxon>Poales</taxon>
        <taxon>Poaceae</taxon>
        <taxon>BOP clade</taxon>
        <taxon>Pooideae</taxon>
        <taxon>Triticodae</taxon>
        <taxon>Triticeae</taxon>
        <taxon>Triticinae</taxon>
        <taxon>Aegilops</taxon>
    </lineage>
</organism>
<proteinExistence type="inferred from homology"/>
<accession>P68540</accession>
<accession>P08741</accession>